<comment type="function">
    <text evidence="1">Essential component of the TIM23 complex, a complex that mediates the translocation of transit peptide-containing proteins across the mitochondrial inner membrane.</text>
</comment>
<comment type="subunit">
    <text evidence="1">Component of the TIM23 complex at least composed of Tim23, Tim17 (Tim17a1, Tim17a2 or Tim17b1) and a Tim50.</text>
</comment>
<comment type="subcellular location">
    <subcellularLocation>
        <location evidence="1">Mitochondrion inner membrane</location>
        <topology evidence="1">Single-pass membrane protein</topology>
    </subcellularLocation>
</comment>
<comment type="similarity">
    <text evidence="5">Belongs to the TIM50 family.</text>
</comment>
<comment type="sequence caution" evidence="5">
    <conflict type="erroneous gene model prediction">
        <sequence resource="EMBL-CDS" id="CAA16816"/>
    </conflict>
</comment>
<keyword id="KW-0472">Membrane</keyword>
<keyword id="KW-0496">Mitochondrion</keyword>
<keyword id="KW-0999">Mitochondrion inner membrane</keyword>
<keyword id="KW-0653">Protein transport</keyword>
<keyword id="KW-1185">Reference proteome</keyword>
<keyword id="KW-0809">Transit peptide</keyword>
<keyword id="KW-0811">Translocation</keyword>
<keyword id="KW-0812">Transmembrane</keyword>
<keyword id="KW-1133">Transmembrane helix</keyword>
<keyword id="KW-0813">Transport</keyword>
<accession>Q9W4V8</accession>
<accession>O76907</accession>
<accession>Q8SZT0</accession>
<protein>
    <recommendedName>
        <fullName>Mitochondrial import inner membrane translocase subunit TIM50-C</fullName>
    </recommendedName>
    <alternativeName>
        <fullName>Tiny tim 50</fullName>
    </alternativeName>
</protein>
<sequence>MSMSMAPATVLQLLRGLSTPRLLTHIHQHRALGNHYHHYHQHYQHQHHLLHHQQQYLRLFTCTALPAAAPALFSILHTARGYSSTTKQEAGATGPNDAPEVAPNAPLLAKLFPQTSPEVDSNAEQERKKREEEEEKENERAWKRMKLGFAIFGGSAVAAGFWAVYEFGKPEVDPNGQPIEDEFTHKPLVQQYLQRMWKSIHYYQRMIQEPSRAKLLPDPLKPPYVQPRYTLVLEMKDVLVHPDWTYQTGWRFKKRPGVDHFLAECAKDFEIVVFTAEQGMTVFPILDALDPNGYIMYRLVRDATHFVDGHHVKNLDNLNRDLKKVIVVDWDANATKMHPDNTFGLARWHGNDDDGQLLDLIAFLKIIAQNNVDDVREVLHYYRQFDDPINQFRENQRKLAEQMLEAERIEQSKTKPMVKQWSRNILGR</sequence>
<proteinExistence type="evidence at transcript level"/>
<gene>
    <name type="primary">ttm50</name>
    <name type="ORF">CG2713</name>
</gene>
<dbReference type="EMBL" id="AE014298">
    <property type="protein sequence ID" value="AAF45820.2"/>
    <property type="molecule type" value="Genomic_DNA"/>
</dbReference>
<dbReference type="EMBL" id="AL021728">
    <property type="protein sequence ID" value="CAA16816.1"/>
    <property type="status" value="ALT_SEQ"/>
    <property type="molecule type" value="Genomic_DNA"/>
</dbReference>
<dbReference type="EMBL" id="AY070535">
    <property type="protein sequence ID" value="AAL48006.1"/>
    <property type="molecule type" value="mRNA"/>
</dbReference>
<dbReference type="PIR" id="T13651">
    <property type="entry name" value="T13651"/>
</dbReference>
<dbReference type="RefSeq" id="NP_001303557.1">
    <property type="nucleotide sequence ID" value="NM_001316628.1"/>
</dbReference>
<dbReference type="RefSeq" id="NP_570027.1">
    <property type="nucleotide sequence ID" value="NM_130671.3"/>
</dbReference>
<dbReference type="SMR" id="Q9W4V8"/>
<dbReference type="BioGRID" id="57797">
    <property type="interactions" value="26"/>
</dbReference>
<dbReference type="DIP" id="DIP-17507N"/>
<dbReference type="FunCoup" id="Q9W4V8">
    <property type="interactions" value="2467"/>
</dbReference>
<dbReference type="IntAct" id="Q9W4V8">
    <property type="interactions" value="3"/>
</dbReference>
<dbReference type="STRING" id="7227.FBpp0312448"/>
<dbReference type="PaxDb" id="7227-FBpp0070474"/>
<dbReference type="DNASU" id="31266"/>
<dbReference type="EnsemblMetazoa" id="FBtr0070497">
    <property type="protein sequence ID" value="FBpp0070474"/>
    <property type="gene ID" value="FBgn0250874"/>
</dbReference>
<dbReference type="EnsemblMetazoa" id="FBtr0347024">
    <property type="protein sequence ID" value="FBpp0312448"/>
    <property type="gene ID" value="FBgn0250874"/>
</dbReference>
<dbReference type="GeneID" id="31266"/>
<dbReference type="KEGG" id="dme:Dmel_CG2713"/>
<dbReference type="AGR" id="FB:FBgn0250874"/>
<dbReference type="CTD" id="31266"/>
<dbReference type="FlyBase" id="FBgn0250874">
    <property type="gene designation" value="ttm50"/>
</dbReference>
<dbReference type="VEuPathDB" id="VectorBase:FBgn0250874"/>
<dbReference type="eggNOG" id="KOG2832">
    <property type="taxonomic scope" value="Eukaryota"/>
</dbReference>
<dbReference type="GeneTree" id="ENSGT01040000240503"/>
<dbReference type="HOGENOM" id="CLU_048293_0_0_1"/>
<dbReference type="InParanoid" id="Q9W4V8"/>
<dbReference type="OMA" id="WKSLHYY"/>
<dbReference type="OrthoDB" id="287041at2759"/>
<dbReference type="PhylomeDB" id="Q9W4V8"/>
<dbReference type="SignaLink" id="Q9W4V8"/>
<dbReference type="BioGRID-ORCS" id="31266">
    <property type="hits" value="0 hits in 1 CRISPR screen"/>
</dbReference>
<dbReference type="GenomeRNAi" id="31266"/>
<dbReference type="PRO" id="PR:Q9W4V8"/>
<dbReference type="Proteomes" id="UP000000803">
    <property type="component" value="Chromosome X"/>
</dbReference>
<dbReference type="Bgee" id="FBgn0250874">
    <property type="expression patterns" value="Expressed in adult Malpighian tubule (Drosophila) and 111 other cell types or tissues"/>
</dbReference>
<dbReference type="ExpressionAtlas" id="Q9W4V8">
    <property type="expression patterns" value="baseline and differential"/>
</dbReference>
<dbReference type="GO" id="GO:0005783">
    <property type="term" value="C:endoplasmic reticulum"/>
    <property type="evidence" value="ECO:0000314"/>
    <property type="project" value="FlyBase"/>
</dbReference>
<dbReference type="GO" id="GO:0005794">
    <property type="term" value="C:Golgi apparatus"/>
    <property type="evidence" value="ECO:0000314"/>
    <property type="project" value="FlyBase"/>
</dbReference>
<dbReference type="GO" id="GO:0005743">
    <property type="term" value="C:mitochondrial inner membrane"/>
    <property type="evidence" value="ECO:0000269"/>
    <property type="project" value="FlyBase"/>
</dbReference>
<dbReference type="GO" id="GO:0005739">
    <property type="term" value="C:mitochondrion"/>
    <property type="evidence" value="ECO:0000314"/>
    <property type="project" value="FlyBase"/>
</dbReference>
<dbReference type="GO" id="GO:0005744">
    <property type="term" value="C:TIM23 mitochondrial import inner membrane translocase complex"/>
    <property type="evidence" value="ECO:0000250"/>
    <property type="project" value="UniProtKB"/>
</dbReference>
<dbReference type="GO" id="GO:0140608">
    <property type="term" value="F:cysteine-type endopeptidase activator activity"/>
    <property type="evidence" value="ECO:0000314"/>
    <property type="project" value="FlyBase"/>
</dbReference>
<dbReference type="GO" id="GO:0004722">
    <property type="term" value="F:protein serine/threonine phosphatase activity"/>
    <property type="evidence" value="ECO:0000250"/>
    <property type="project" value="UniProtKB"/>
</dbReference>
<dbReference type="GO" id="GO:0004725">
    <property type="term" value="F:protein tyrosine phosphatase activity"/>
    <property type="evidence" value="ECO:0000250"/>
    <property type="project" value="UniProtKB"/>
</dbReference>
<dbReference type="GO" id="GO:0007006">
    <property type="term" value="P:mitochondrial membrane organization"/>
    <property type="evidence" value="ECO:0000250"/>
    <property type="project" value="UniProtKB"/>
</dbReference>
<dbReference type="GO" id="GO:0007005">
    <property type="term" value="P:mitochondrion organization"/>
    <property type="evidence" value="ECO:0000315"/>
    <property type="project" value="FlyBase"/>
</dbReference>
<dbReference type="GO" id="GO:0006470">
    <property type="term" value="P:protein dephosphorylation"/>
    <property type="evidence" value="ECO:0000250"/>
    <property type="project" value="UniProtKB"/>
</dbReference>
<dbReference type="GO" id="GO:0030150">
    <property type="term" value="P:protein import into mitochondrial matrix"/>
    <property type="evidence" value="ECO:0000318"/>
    <property type="project" value="GO_Central"/>
</dbReference>
<dbReference type="GO" id="GO:0070972">
    <property type="term" value="P:protein localization to endoplasmic reticulum"/>
    <property type="evidence" value="ECO:0000314"/>
    <property type="project" value="FlyBase"/>
</dbReference>
<dbReference type="GO" id="GO:0034067">
    <property type="term" value="P:protein localization to Golgi apparatus"/>
    <property type="evidence" value="ECO:0000314"/>
    <property type="project" value="FlyBase"/>
</dbReference>
<dbReference type="CDD" id="cd07521">
    <property type="entry name" value="HAD_FCP1-like"/>
    <property type="match status" value="1"/>
</dbReference>
<dbReference type="FunFam" id="3.40.50.1000:FF:000019">
    <property type="entry name" value="Mitochondrial import inner membrane translocase subunit TIM50"/>
    <property type="match status" value="1"/>
</dbReference>
<dbReference type="Gene3D" id="3.40.50.1000">
    <property type="entry name" value="HAD superfamily/HAD-like"/>
    <property type="match status" value="1"/>
</dbReference>
<dbReference type="InterPro" id="IPR004274">
    <property type="entry name" value="FCP1_dom"/>
</dbReference>
<dbReference type="InterPro" id="IPR036412">
    <property type="entry name" value="HAD-like_sf"/>
</dbReference>
<dbReference type="InterPro" id="IPR023214">
    <property type="entry name" value="HAD_sf"/>
</dbReference>
<dbReference type="InterPro" id="IPR050365">
    <property type="entry name" value="TIM50"/>
</dbReference>
<dbReference type="PANTHER" id="PTHR12210">
    <property type="entry name" value="DULLARD PROTEIN PHOSPHATASE"/>
    <property type="match status" value="1"/>
</dbReference>
<dbReference type="Pfam" id="PF03031">
    <property type="entry name" value="NIF"/>
    <property type="match status" value="1"/>
</dbReference>
<dbReference type="SMART" id="SM00577">
    <property type="entry name" value="CPDc"/>
    <property type="match status" value="1"/>
</dbReference>
<dbReference type="SUPFAM" id="SSF56784">
    <property type="entry name" value="HAD-like"/>
    <property type="match status" value="1"/>
</dbReference>
<dbReference type="PROSITE" id="PS50969">
    <property type="entry name" value="FCP1"/>
    <property type="match status" value="1"/>
</dbReference>
<name>TI50C_DROME</name>
<evidence type="ECO:0000250" key="1"/>
<evidence type="ECO:0000255" key="2"/>
<evidence type="ECO:0000255" key="3">
    <source>
        <dbReference type="PROSITE-ProRule" id="PRU00336"/>
    </source>
</evidence>
<evidence type="ECO:0000256" key="4">
    <source>
        <dbReference type="SAM" id="MobiDB-lite"/>
    </source>
</evidence>
<evidence type="ECO:0000305" key="5"/>
<reference key="1">
    <citation type="journal article" date="2000" name="Science">
        <title>The genome sequence of Drosophila melanogaster.</title>
        <authorList>
            <person name="Adams M.D."/>
            <person name="Celniker S.E."/>
            <person name="Holt R.A."/>
            <person name="Evans C.A."/>
            <person name="Gocayne J.D."/>
            <person name="Amanatides P.G."/>
            <person name="Scherer S.E."/>
            <person name="Li P.W."/>
            <person name="Hoskins R.A."/>
            <person name="Galle R.F."/>
            <person name="George R.A."/>
            <person name="Lewis S.E."/>
            <person name="Richards S."/>
            <person name="Ashburner M."/>
            <person name="Henderson S.N."/>
            <person name="Sutton G.G."/>
            <person name="Wortman J.R."/>
            <person name="Yandell M.D."/>
            <person name="Zhang Q."/>
            <person name="Chen L.X."/>
            <person name="Brandon R.C."/>
            <person name="Rogers Y.-H.C."/>
            <person name="Blazej R.G."/>
            <person name="Champe M."/>
            <person name="Pfeiffer B.D."/>
            <person name="Wan K.H."/>
            <person name="Doyle C."/>
            <person name="Baxter E.G."/>
            <person name="Helt G."/>
            <person name="Nelson C.R."/>
            <person name="Miklos G.L.G."/>
            <person name="Abril J.F."/>
            <person name="Agbayani A."/>
            <person name="An H.-J."/>
            <person name="Andrews-Pfannkoch C."/>
            <person name="Baldwin D."/>
            <person name="Ballew R.M."/>
            <person name="Basu A."/>
            <person name="Baxendale J."/>
            <person name="Bayraktaroglu L."/>
            <person name="Beasley E.M."/>
            <person name="Beeson K.Y."/>
            <person name="Benos P.V."/>
            <person name="Berman B.P."/>
            <person name="Bhandari D."/>
            <person name="Bolshakov S."/>
            <person name="Borkova D."/>
            <person name="Botchan M.R."/>
            <person name="Bouck J."/>
            <person name="Brokstein P."/>
            <person name="Brottier P."/>
            <person name="Burtis K.C."/>
            <person name="Busam D.A."/>
            <person name="Butler H."/>
            <person name="Cadieu E."/>
            <person name="Center A."/>
            <person name="Chandra I."/>
            <person name="Cherry J.M."/>
            <person name="Cawley S."/>
            <person name="Dahlke C."/>
            <person name="Davenport L.B."/>
            <person name="Davies P."/>
            <person name="de Pablos B."/>
            <person name="Delcher A."/>
            <person name="Deng Z."/>
            <person name="Mays A.D."/>
            <person name="Dew I."/>
            <person name="Dietz S.M."/>
            <person name="Dodson K."/>
            <person name="Doup L.E."/>
            <person name="Downes M."/>
            <person name="Dugan-Rocha S."/>
            <person name="Dunkov B.C."/>
            <person name="Dunn P."/>
            <person name="Durbin K.J."/>
            <person name="Evangelista C.C."/>
            <person name="Ferraz C."/>
            <person name="Ferriera S."/>
            <person name="Fleischmann W."/>
            <person name="Fosler C."/>
            <person name="Gabrielian A.E."/>
            <person name="Garg N.S."/>
            <person name="Gelbart W.M."/>
            <person name="Glasser K."/>
            <person name="Glodek A."/>
            <person name="Gong F."/>
            <person name="Gorrell J.H."/>
            <person name="Gu Z."/>
            <person name="Guan P."/>
            <person name="Harris M."/>
            <person name="Harris N.L."/>
            <person name="Harvey D.A."/>
            <person name="Heiman T.J."/>
            <person name="Hernandez J.R."/>
            <person name="Houck J."/>
            <person name="Hostin D."/>
            <person name="Houston K.A."/>
            <person name="Howland T.J."/>
            <person name="Wei M.-H."/>
            <person name="Ibegwam C."/>
            <person name="Jalali M."/>
            <person name="Kalush F."/>
            <person name="Karpen G.H."/>
            <person name="Ke Z."/>
            <person name="Kennison J.A."/>
            <person name="Ketchum K.A."/>
            <person name="Kimmel B.E."/>
            <person name="Kodira C.D."/>
            <person name="Kraft C.L."/>
            <person name="Kravitz S."/>
            <person name="Kulp D."/>
            <person name="Lai Z."/>
            <person name="Lasko P."/>
            <person name="Lei Y."/>
            <person name="Levitsky A.A."/>
            <person name="Li J.H."/>
            <person name="Li Z."/>
            <person name="Liang Y."/>
            <person name="Lin X."/>
            <person name="Liu X."/>
            <person name="Mattei B."/>
            <person name="McIntosh T.C."/>
            <person name="McLeod M.P."/>
            <person name="McPherson D."/>
            <person name="Merkulov G."/>
            <person name="Milshina N.V."/>
            <person name="Mobarry C."/>
            <person name="Morris J."/>
            <person name="Moshrefi A."/>
            <person name="Mount S.M."/>
            <person name="Moy M."/>
            <person name="Murphy B."/>
            <person name="Murphy L."/>
            <person name="Muzny D.M."/>
            <person name="Nelson D.L."/>
            <person name="Nelson D.R."/>
            <person name="Nelson K.A."/>
            <person name="Nixon K."/>
            <person name="Nusskern D.R."/>
            <person name="Pacleb J.M."/>
            <person name="Palazzolo M."/>
            <person name="Pittman G.S."/>
            <person name="Pan S."/>
            <person name="Pollard J."/>
            <person name="Puri V."/>
            <person name="Reese M.G."/>
            <person name="Reinert K."/>
            <person name="Remington K."/>
            <person name="Saunders R.D.C."/>
            <person name="Scheeler F."/>
            <person name="Shen H."/>
            <person name="Shue B.C."/>
            <person name="Siden-Kiamos I."/>
            <person name="Simpson M."/>
            <person name="Skupski M.P."/>
            <person name="Smith T.J."/>
            <person name="Spier E."/>
            <person name="Spradling A.C."/>
            <person name="Stapleton M."/>
            <person name="Strong R."/>
            <person name="Sun E."/>
            <person name="Svirskas R."/>
            <person name="Tector C."/>
            <person name="Turner R."/>
            <person name="Venter E."/>
            <person name="Wang A.H."/>
            <person name="Wang X."/>
            <person name="Wang Z.-Y."/>
            <person name="Wassarman D.A."/>
            <person name="Weinstock G.M."/>
            <person name="Weissenbach J."/>
            <person name="Williams S.M."/>
            <person name="Woodage T."/>
            <person name="Worley K.C."/>
            <person name="Wu D."/>
            <person name="Yang S."/>
            <person name="Yao Q.A."/>
            <person name="Ye J."/>
            <person name="Yeh R.-F."/>
            <person name="Zaveri J.S."/>
            <person name="Zhan M."/>
            <person name="Zhang G."/>
            <person name="Zhao Q."/>
            <person name="Zheng L."/>
            <person name="Zheng X.H."/>
            <person name="Zhong F.N."/>
            <person name="Zhong W."/>
            <person name="Zhou X."/>
            <person name="Zhu S.C."/>
            <person name="Zhu X."/>
            <person name="Smith H.O."/>
            <person name="Gibbs R.A."/>
            <person name="Myers E.W."/>
            <person name="Rubin G.M."/>
            <person name="Venter J.C."/>
        </authorList>
    </citation>
    <scope>NUCLEOTIDE SEQUENCE [LARGE SCALE GENOMIC DNA]</scope>
    <source>
        <strain>Berkeley</strain>
    </source>
</reference>
<reference key="2">
    <citation type="journal article" date="2002" name="Genome Biol.">
        <title>Annotation of the Drosophila melanogaster euchromatic genome: a systematic review.</title>
        <authorList>
            <person name="Misra S."/>
            <person name="Crosby M.A."/>
            <person name="Mungall C.J."/>
            <person name="Matthews B.B."/>
            <person name="Campbell K.S."/>
            <person name="Hradecky P."/>
            <person name="Huang Y."/>
            <person name="Kaminker J.S."/>
            <person name="Millburn G.H."/>
            <person name="Prochnik S.E."/>
            <person name="Smith C.D."/>
            <person name="Tupy J.L."/>
            <person name="Whitfield E.J."/>
            <person name="Bayraktaroglu L."/>
            <person name="Berman B.P."/>
            <person name="Bettencourt B.R."/>
            <person name="Celniker S.E."/>
            <person name="de Grey A.D.N.J."/>
            <person name="Drysdale R.A."/>
            <person name="Harris N.L."/>
            <person name="Richter J."/>
            <person name="Russo S."/>
            <person name="Schroeder A.J."/>
            <person name="Shu S.Q."/>
            <person name="Stapleton M."/>
            <person name="Yamada C."/>
            <person name="Ashburner M."/>
            <person name="Gelbart W.M."/>
            <person name="Rubin G.M."/>
            <person name="Lewis S.E."/>
        </authorList>
    </citation>
    <scope>GENOME REANNOTATION</scope>
    <source>
        <strain>Berkeley</strain>
    </source>
</reference>
<reference key="3">
    <citation type="journal article" date="2000" name="Science">
        <title>From sequence to chromosome: the tip of the X chromosome of D. melanogaster.</title>
        <authorList>
            <person name="Benos P.V."/>
            <person name="Gatt M.K."/>
            <person name="Ashburner M."/>
            <person name="Murphy L."/>
            <person name="Harris D."/>
            <person name="Barrell B.G."/>
            <person name="Ferraz C."/>
            <person name="Vidal S."/>
            <person name="Brun C."/>
            <person name="Demailles J."/>
            <person name="Cadieu E."/>
            <person name="Dreano S."/>
            <person name="Gloux S."/>
            <person name="Lelaure V."/>
            <person name="Mottier S."/>
            <person name="Galibert F."/>
            <person name="Borkova D."/>
            <person name="Minana B."/>
            <person name="Kafatos F.C."/>
            <person name="Louis C."/>
            <person name="Siden-Kiamos I."/>
            <person name="Bolshakov S."/>
            <person name="Papagiannakis G."/>
            <person name="Spanos L."/>
            <person name="Cox S."/>
            <person name="Madueno E."/>
            <person name="de Pablos B."/>
            <person name="Modolell J."/>
            <person name="Peter A."/>
            <person name="Schoettler P."/>
            <person name="Werner M."/>
            <person name="Mourkioti F."/>
            <person name="Beinert N."/>
            <person name="Dowe G."/>
            <person name="Schaefer U."/>
            <person name="Jaeckle H."/>
            <person name="Bucheton A."/>
            <person name="Callister D.M."/>
            <person name="Campbell L.A."/>
            <person name="Darlamitsou A."/>
            <person name="Henderson N.S."/>
            <person name="McMillan P.J."/>
            <person name="Salles C."/>
            <person name="Tait E.A."/>
            <person name="Valenti P."/>
            <person name="Saunders R.D.C."/>
            <person name="Glover D.M."/>
        </authorList>
    </citation>
    <scope>NUCLEOTIDE SEQUENCE [LARGE SCALE GENOMIC DNA]</scope>
    <source>
        <strain>Oregon-R</strain>
    </source>
</reference>
<reference key="4">
    <citation type="journal article" date="2002" name="Genome Biol.">
        <title>A Drosophila full-length cDNA resource.</title>
        <authorList>
            <person name="Stapleton M."/>
            <person name="Carlson J.W."/>
            <person name="Brokstein P."/>
            <person name="Yu C."/>
            <person name="Champe M."/>
            <person name="George R.A."/>
            <person name="Guarin H."/>
            <person name="Kronmiller B."/>
            <person name="Pacleb J.M."/>
            <person name="Park S."/>
            <person name="Wan K.H."/>
            <person name="Rubin G.M."/>
            <person name="Celniker S.E."/>
        </authorList>
    </citation>
    <scope>NUCLEOTIDE SEQUENCE [LARGE SCALE MRNA]</scope>
    <source>
        <strain>Berkeley</strain>
        <tissue>Embryo</tissue>
    </source>
</reference>
<organism>
    <name type="scientific">Drosophila melanogaster</name>
    <name type="common">Fruit fly</name>
    <dbReference type="NCBI Taxonomy" id="7227"/>
    <lineage>
        <taxon>Eukaryota</taxon>
        <taxon>Metazoa</taxon>
        <taxon>Ecdysozoa</taxon>
        <taxon>Arthropoda</taxon>
        <taxon>Hexapoda</taxon>
        <taxon>Insecta</taxon>
        <taxon>Pterygota</taxon>
        <taxon>Neoptera</taxon>
        <taxon>Endopterygota</taxon>
        <taxon>Diptera</taxon>
        <taxon>Brachycera</taxon>
        <taxon>Muscomorpha</taxon>
        <taxon>Ephydroidea</taxon>
        <taxon>Drosophilidae</taxon>
        <taxon>Drosophila</taxon>
        <taxon>Sophophora</taxon>
    </lineage>
</organism>
<feature type="transit peptide" description="Mitochondrion" evidence="2">
    <location>
        <begin position="1"/>
        <end status="unknown"/>
    </location>
</feature>
<feature type="chain" id="PRO_0000043123" description="Mitochondrial import inner membrane translocase subunit TIM50-C">
    <location>
        <begin status="unknown"/>
        <end position="428"/>
    </location>
</feature>
<feature type="topological domain" description="Mitochondrial matrix" evidence="2">
    <location>
        <begin status="unknown"/>
        <end position="58"/>
    </location>
</feature>
<feature type="transmembrane region" description="Helical" evidence="2">
    <location>
        <begin position="59"/>
        <end position="79"/>
    </location>
</feature>
<feature type="topological domain" description="Mitochondrial intermembrane" evidence="2">
    <location>
        <begin position="80"/>
        <end position="428"/>
    </location>
</feature>
<feature type="domain" description="FCP1 homology" evidence="3">
    <location>
        <begin position="224"/>
        <end position="367"/>
    </location>
</feature>
<feature type="region of interest" description="Disordered" evidence="4">
    <location>
        <begin position="112"/>
        <end position="138"/>
    </location>
</feature>
<feature type="compositionally biased region" description="Basic and acidic residues" evidence="4">
    <location>
        <begin position="124"/>
        <end position="138"/>
    </location>
</feature>
<feature type="sequence conflict" description="In Ref. 3; CAA16816." evidence="5" ref="3">
    <original>D</original>
    <variation>G</variation>
    <location>
        <position position="308"/>
    </location>
</feature>